<dbReference type="EC" id="2.1.2.11" evidence="1"/>
<dbReference type="EMBL" id="CP000481">
    <property type="protein sequence ID" value="ABK52690.1"/>
    <property type="molecule type" value="Genomic_DNA"/>
</dbReference>
<dbReference type="RefSeq" id="WP_011719753.1">
    <property type="nucleotide sequence ID" value="NC_008578.1"/>
</dbReference>
<dbReference type="SMR" id="A0LTD0"/>
<dbReference type="FunCoup" id="A0LTD0">
    <property type="interactions" value="154"/>
</dbReference>
<dbReference type="STRING" id="351607.Acel_0917"/>
<dbReference type="KEGG" id="ace:Acel_0917"/>
<dbReference type="eggNOG" id="COG0413">
    <property type="taxonomic scope" value="Bacteria"/>
</dbReference>
<dbReference type="HOGENOM" id="CLU_036645_1_0_11"/>
<dbReference type="InParanoid" id="A0LTD0"/>
<dbReference type="OrthoDB" id="9781789at2"/>
<dbReference type="UniPathway" id="UPA00028">
    <property type="reaction ID" value="UER00003"/>
</dbReference>
<dbReference type="Proteomes" id="UP000008221">
    <property type="component" value="Chromosome"/>
</dbReference>
<dbReference type="GO" id="GO:0005737">
    <property type="term" value="C:cytoplasm"/>
    <property type="evidence" value="ECO:0007669"/>
    <property type="project" value="UniProtKB-SubCell"/>
</dbReference>
<dbReference type="GO" id="GO:0003864">
    <property type="term" value="F:3-methyl-2-oxobutanoate hydroxymethyltransferase activity"/>
    <property type="evidence" value="ECO:0007669"/>
    <property type="project" value="UniProtKB-UniRule"/>
</dbReference>
<dbReference type="GO" id="GO:0000287">
    <property type="term" value="F:magnesium ion binding"/>
    <property type="evidence" value="ECO:0007669"/>
    <property type="project" value="TreeGrafter"/>
</dbReference>
<dbReference type="GO" id="GO:0015940">
    <property type="term" value="P:pantothenate biosynthetic process"/>
    <property type="evidence" value="ECO:0007669"/>
    <property type="project" value="UniProtKB-UniRule"/>
</dbReference>
<dbReference type="CDD" id="cd06557">
    <property type="entry name" value="KPHMT-like"/>
    <property type="match status" value="1"/>
</dbReference>
<dbReference type="FunFam" id="3.20.20.60:FF:000003">
    <property type="entry name" value="3-methyl-2-oxobutanoate hydroxymethyltransferase"/>
    <property type="match status" value="1"/>
</dbReference>
<dbReference type="Gene3D" id="3.20.20.60">
    <property type="entry name" value="Phosphoenolpyruvate-binding domains"/>
    <property type="match status" value="1"/>
</dbReference>
<dbReference type="HAMAP" id="MF_00156">
    <property type="entry name" value="PanB"/>
    <property type="match status" value="1"/>
</dbReference>
<dbReference type="InterPro" id="IPR003700">
    <property type="entry name" value="Pantoate_hydroxy_MeTrfase"/>
</dbReference>
<dbReference type="InterPro" id="IPR015813">
    <property type="entry name" value="Pyrv/PenolPyrv_kinase-like_dom"/>
</dbReference>
<dbReference type="InterPro" id="IPR040442">
    <property type="entry name" value="Pyrv_kinase-like_dom_sf"/>
</dbReference>
<dbReference type="NCBIfam" id="TIGR00222">
    <property type="entry name" value="panB"/>
    <property type="match status" value="1"/>
</dbReference>
<dbReference type="NCBIfam" id="NF001452">
    <property type="entry name" value="PRK00311.1"/>
    <property type="match status" value="1"/>
</dbReference>
<dbReference type="PANTHER" id="PTHR20881">
    <property type="entry name" value="3-METHYL-2-OXOBUTANOATE HYDROXYMETHYLTRANSFERASE"/>
    <property type="match status" value="1"/>
</dbReference>
<dbReference type="PANTHER" id="PTHR20881:SF0">
    <property type="entry name" value="3-METHYL-2-OXOBUTANOATE HYDROXYMETHYLTRANSFERASE"/>
    <property type="match status" value="1"/>
</dbReference>
<dbReference type="Pfam" id="PF02548">
    <property type="entry name" value="Pantoate_transf"/>
    <property type="match status" value="1"/>
</dbReference>
<dbReference type="PIRSF" id="PIRSF000388">
    <property type="entry name" value="Pantoate_hydroxy_MeTrfase"/>
    <property type="match status" value="1"/>
</dbReference>
<dbReference type="SUPFAM" id="SSF51621">
    <property type="entry name" value="Phosphoenolpyruvate/pyruvate domain"/>
    <property type="match status" value="1"/>
</dbReference>
<organism>
    <name type="scientific">Acidothermus cellulolyticus (strain ATCC 43068 / DSM 8971 / 11B)</name>
    <dbReference type="NCBI Taxonomy" id="351607"/>
    <lineage>
        <taxon>Bacteria</taxon>
        <taxon>Bacillati</taxon>
        <taxon>Actinomycetota</taxon>
        <taxon>Actinomycetes</taxon>
        <taxon>Acidothermales</taxon>
        <taxon>Acidothermaceae</taxon>
        <taxon>Acidothermus</taxon>
    </lineage>
</organism>
<feature type="chain" id="PRO_0000297205" description="3-methyl-2-oxobutanoate hydroxymethyltransferase">
    <location>
        <begin position="1"/>
        <end position="271"/>
    </location>
</feature>
<feature type="active site" description="Proton acceptor" evidence="1">
    <location>
        <position position="189"/>
    </location>
</feature>
<feature type="binding site" evidence="1">
    <location>
        <begin position="52"/>
        <end position="53"/>
    </location>
    <ligand>
        <name>3-methyl-2-oxobutanoate</name>
        <dbReference type="ChEBI" id="CHEBI:11851"/>
    </ligand>
</feature>
<feature type="binding site" evidence="1">
    <location>
        <position position="52"/>
    </location>
    <ligand>
        <name>Mg(2+)</name>
        <dbReference type="ChEBI" id="CHEBI:18420"/>
    </ligand>
</feature>
<feature type="binding site" evidence="1">
    <location>
        <position position="91"/>
    </location>
    <ligand>
        <name>3-methyl-2-oxobutanoate</name>
        <dbReference type="ChEBI" id="CHEBI:11851"/>
    </ligand>
</feature>
<feature type="binding site" evidence="1">
    <location>
        <position position="91"/>
    </location>
    <ligand>
        <name>Mg(2+)</name>
        <dbReference type="ChEBI" id="CHEBI:18420"/>
    </ligand>
</feature>
<feature type="binding site" evidence="1">
    <location>
        <position position="121"/>
    </location>
    <ligand>
        <name>3-methyl-2-oxobutanoate</name>
        <dbReference type="ChEBI" id="CHEBI:11851"/>
    </ligand>
</feature>
<feature type="binding site" evidence="1">
    <location>
        <position position="123"/>
    </location>
    <ligand>
        <name>Mg(2+)</name>
        <dbReference type="ChEBI" id="CHEBI:18420"/>
    </ligand>
</feature>
<accession>A0LTD0</accession>
<name>PANB_ACIC1</name>
<sequence length="271" mass="29007">MSAAADVPRRVTIHDLQLRKRQHRRWAMLTCYDALTARIFEEAGIDVLLVGDSAANTVLGYPDTLGVDVDELLILNRAVARAAQRALVVADLPFGSYQISPRQALQTAIRFVKRAGVQAVKFEGGRRVAEHVRTVVEAGIPVMAHIGFTPQSVHALGGYRVQGRGDDAAAIRDDALALQEAGAFAIVLELVPAGLAAELTAALQIPTIGIGAGPDCDAQVLVWTDMAGLTPQPTPKFVKRYADLRTVLHDAARAFAADVADGRYPDAAHSY</sequence>
<proteinExistence type="inferred from homology"/>
<gene>
    <name evidence="1" type="primary">panB</name>
    <name type="ordered locus">Acel_0917</name>
</gene>
<comment type="function">
    <text evidence="1">Catalyzes the reversible reaction in which hydroxymethyl group from 5,10-methylenetetrahydrofolate is transferred onto alpha-ketoisovalerate to form ketopantoate.</text>
</comment>
<comment type="catalytic activity">
    <reaction evidence="1">
        <text>3-methyl-2-oxobutanoate + (6R)-5,10-methylene-5,6,7,8-tetrahydrofolate + H2O = 2-dehydropantoate + (6S)-5,6,7,8-tetrahydrofolate</text>
        <dbReference type="Rhea" id="RHEA:11824"/>
        <dbReference type="ChEBI" id="CHEBI:11561"/>
        <dbReference type="ChEBI" id="CHEBI:11851"/>
        <dbReference type="ChEBI" id="CHEBI:15377"/>
        <dbReference type="ChEBI" id="CHEBI:15636"/>
        <dbReference type="ChEBI" id="CHEBI:57453"/>
        <dbReference type="EC" id="2.1.2.11"/>
    </reaction>
</comment>
<comment type="cofactor">
    <cofactor evidence="1">
        <name>Mg(2+)</name>
        <dbReference type="ChEBI" id="CHEBI:18420"/>
    </cofactor>
    <text evidence="1">Binds 1 Mg(2+) ion per subunit.</text>
</comment>
<comment type="pathway">
    <text evidence="1">Cofactor biosynthesis; (R)-pantothenate biosynthesis; (R)-pantoate from 3-methyl-2-oxobutanoate: step 1/2.</text>
</comment>
<comment type="subunit">
    <text evidence="1">Homodecamer; pentamer of dimers.</text>
</comment>
<comment type="subcellular location">
    <subcellularLocation>
        <location evidence="1">Cytoplasm</location>
    </subcellularLocation>
</comment>
<comment type="similarity">
    <text evidence="1">Belongs to the PanB family.</text>
</comment>
<reference key="1">
    <citation type="journal article" date="2009" name="Genome Res.">
        <title>Complete genome of the cellulolytic thermophile Acidothermus cellulolyticus 11B provides insights into its ecophysiological and evolutionary adaptations.</title>
        <authorList>
            <person name="Barabote R.D."/>
            <person name="Xie G."/>
            <person name="Leu D.H."/>
            <person name="Normand P."/>
            <person name="Necsulea A."/>
            <person name="Daubin V."/>
            <person name="Medigue C."/>
            <person name="Adney W.S."/>
            <person name="Xu X.C."/>
            <person name="Lapidus A."/>
            <person name="Parales R.E."/>
            <person name="Detter C."/>
            <person name="Pujic P."/>
            <person name="Bruce D."/>
            <person name="Lavire C."/>
            <person name="Challacombe J.F."/>
            <person name="Brettin T.S."/>
            <person name="Berry A.M."/>
        </authorList>
    </citation>
    <scope>NUCLEOTIDE SEQUENCE [LARGE SCALE GENOMIC DNA]</scope>
    <source>
        <strain>ATCC 43068 / DSM 8971 / 11B</strain>
    </source>
</reference>
<keyword id="KW-0963">Cytoplasm</keyword>
<keyword id="KW-0460">Magnesium</keyword>
<keyword id="KW-0479">Metal-binding</keyword>
<keyword id="KW-0566">Pantothenate biosynthesis</keyword>
<keyword id="KW-1185">Reference proteome</keyword>
<keyword id="KW-0808">Transferase</keyword>
<protein>
    <recommendedName>
        <fullName evidence="1">3-methyl-2-oxobutanoate hydroxymethyltransferase</fullName>
        <ecNumber evidence="1">2.1.2.11</ecNumber>
    </recommendedName>
    <alternativeName>
        <fullName evidence="1">Ketopantoate hydroxymethyltransferase</fullName>
        <shortName evidence="1">KPHMT</shortName>
    </alternativeName>
</protein>
<evidence type="ECO:0000255" key="1">
    <source>
        <dbReference type="HAMAP-Rule" id="MF_00156"/>
    </source>
</evidence>